<reference key="1">
    <citation type="journal article" date="1997" name="Science">
        <title>The complete genome sequence of Escherichia coli K-12.</title>
        <authorList>
            <person name="Blattner F.R."/>
            <person name="Plunkett G. III"/>
            <person name="Bloch C.A."/>
            <person name="Perna N.T."/>
            <person name="Burland V."/>
            <person name="Riley M."/>
            <person name="Collado-Vides J."/>
            <person name="Glasner J.D."/>
            <person name="Rode C.K."/>
            <person name="Mayhew G.F."/>
            <person name="Gregor J."/>
            <person name="Davis N.W."/>
            <person name="Kirkpatrick H.A."/>
            <person name="Goeden M.A."/>
            <person name="Rose D.J."/>
            <person name="Mau B."/>
            <person name="Shao Y."/>
        </authorList>
    </citation>
    <scope>NUCLEOTIDE SEQUENCE [LARGE SCALE GENOMIC DNA]</scope>
    <source>
        <strain>K12 / MG1655 / ATCC 47076</strain>
    </source>
</reference>
<reference key="2">
    <citation type="journal article" date="2006" name="Mol. Syst. Biol.">
        <title>Highly accurate genome sequences of Escherichia coli K-12 strains MG1655 and W3110.</title>
        <authorList>
            <person name="Hayashi K."/>
            <person name="Morooka N."/>
            <person name="Yamamoto Y."/>
            <person name="Fujita K."/>
            <person name="Isono K."/>
            <person name="Choi S."/>
            <person name="Ohtsubo E."/>
            <person name="Baba T."/>
            <person name="Wanner B.L."/>
            <person name="Mori H."/>
            <person name="Horiuchi T."/>
        </authorList>
    </citation>
    <scope>NUCLEOTIDE SEQUENCE [LARGE SCALE GENOMIC DNA]</scope>
    <source>
        <strain>K12 / W3110 / ATCC 27325 / DSM 5911</strain>
    </source>
</reference>
<reference key="3">
    <citation type="journal article" date="2017" name="MSphere">
        <title>Repression of YdaS Toxin Is Mediated by Transcriptional Repressor RacR in the Cryptic rac Prophage of Escherichia coli K-12.</title>
        <authorList>
            <person name="Krishnamurthi R."/>
            <person name="Ghosh S."/>
            <person name="Khedkar S."/>
            <person name="Seshasayee A.S.N."/>
        </authorList>
    </citation>
    <scope>FUNCTION</scope>
    <scope>DNA-BINDING</scope>
    <scope>DISRUPTION PHENOTYPE</scope>
    <source>
        <strain>K12 / MG1655 / ATCC 47076</strain>
    </source>
</reference>
<reference key="4">
    <citation type="journal article" date="2017" name="MSphere">
        <title>CRISPR-Cas-Mediated Gene Silencing Reveals RacR To Be a Negative Regulator of YdaS and YdaT Toxins in Escherichia coli K-12.</title>
        <authorList>
            <person name="Bindal G."/>
            <person name="Krishnamurthi R."/>
            <person name="Seshasayee A.S.N."/>
            <person name="Rath D."/>
        </authorList>
    </citation>
    <scope>FUNCTION</scope>
    <scope>DISRUPTION PHENOTYPE</scope>
    <source>
        <strain>K12</strain>
    </source>
</reference>
<reference key="5">
    <citation type="journal article" date="2024" name="Nucleic Acids Res.">
        <title>Lethal perturbation of an Escherichia coli regulatory network is triggered by a restriction-modification system's regulator and can be mitigated by excision of the cryptic prophage Rac.</title>
        <authorList>
            <person name="Gucwa K."/>
            <person name="Wons E."/>
            <person name="Wisniewska A."/>
            <person name="Jakalski M."/>
            <person name="Dubiak Z."/>
            <person name="Kozlowski L.P."/>
            <person name="Mruk I."/>
        </authorList>
    </citation>
    <scope>FUNCTION</scope>
    <scope>SUBUNIT</scope>
    <scope>DOMAIN</scope>
    <source>
        <strain>K12 / MG1655 / ATCC 47076</strain>
    </source>
</reference>
<protein>
    <recommendedName>
        <fullName evidence="4">DNA-binding transcriptional repressor RacR</fullName>
    </recommendedName>
    <alternativeName>
        <fullName evidence="4">Prophage repressor RacR</fullName>
    </alternativeName>
    <alternativeName>
        <fullName>Rac prophage repressor</fullName>
    </alternativeName>
</protein>
<keyword id="KW-0238">DNA-binding</keyword>
<keyword id="KW-1185">Reference proteome</keyword>
<keyword id="KW-0678">Repressor</keyword>
<keyword id="KW-0804">Transcription</keyword>
<keyword id="KW-0805">Transcription regulation</keyword>
<sequence length="158" mass="17663">MLSGKDLGRAIEQAINKKIASGSVKSKAEVARHFKVQPPSIYDWIKKGSISKDKLPELWRFFSDVVGPEHWGLNEYPIPTPTNSDTKSELLDINNLYQAASDEIRAIVAFLLSGNATEPDWVDHDVRAYIAAMEMKVGKYLKALESERKSQNITKTGT</sequence>
<accession>P76062</accession>
<accession>Q2MBE5</accession>
<feature type="chain" id="PRO_0000097148" description="DNA-binding transcriptional repressor RacR">
    <location>
        <begin position="1"/>
        <end position="158"/>
    </location>
</feature>
<name>RACR_ECOLI</name>
<gene>
    <name type="primary">racR</name>
    <name type="synonym">ydaR</name>
    <name type="ordered locus">b1356</name>
    <name type="ordered locus">JW1351</name>
</gene>
<comment type="function">
    <text evidence="1 2 3">Transcriptional regulator that represses the expression of ydaS and ydaT under normal physiological conditions (PubMed:29205228, PubMed:29205229). It binds to its own upstream sequence and represses the adjacent and divergently coded ydaS-ydaT operon (PubMed:29205228). RacR-mediated down-regulation of ydaS and ydaT may be critical for cell survival (PubMed:29205229). RacR ensures that the prophage DNA is maintained in the genome (PubMed:38153127). When the expression of the racR gene is reduced, the prophage Rac is excised from the genome, possibly to counteract the lethal toxicity of YdaT (PubMed:38153127).</text>
</comment>
<comment type="subunit">
    <text evidence="3">Homooctamer.</text>
</comment>
<comment type="domain">
    <text evidence="3">Contains a DNA-binding N-terminal domain (NTD) and a C-terminal domain that facilitates oligomerization.</text>
</comment>
<comment type="disruption phenotype">
    <text evidence="1 2">Deletion of the gene is lethal, except when the adjacent ydaS gene and the common intergenic region between racR and ydaS are also deleted, or when both ydaS and ydaT genes are also deleted (PubMed:29205228). Down-regulation of the gene leads to up-regulation of the adjacent ydaS-ydaT operon (PubMed:29205229). RacR silencing causes striking morphological changes in cells, significant growth arrest and cell death (PubMed:29205229). RacR silencing does not affect biofilm formation (PubMed:29205229).</text>
</comment>
<comment type="miscellaneous">
    <text evidence="1 2">Encoded in the Rac prophage region.</text>
</comment>
<dbReference type="EMBL" id="U00096">
    <property type="protein sequence ID" value="AAC74438.1"/>
    <property type="molecule type" value="Genomic_DNA"/>
</dbReference>
<dbReference type="EMBL" id="AP009048">
    <property type="protein sequence ID" value="BAE76411.1"/>
    <property type="molecule type" value="Genomic_DNA"/>
</dbReference>
<dbReference type="PIR" id="G64885">
    <property type="entry name" value="G64885"/>
</dbReference>
<dbReference type="RefSeq" id="NP_415874.1">
    <property type="nucleotide sequence ID" value="NC_000913.3"/>
</dbReference>
<dbReference type="RefSeq" id="WP_000948459.1">
    <property type="nucleotide sequence ID" value="NZ_JACEFS010000049.1"/>
</dbReference>
<dbReference type="BioGRID" id="4261627">
    <property type="interactions" value="12"/>
</dbReference>
<dbReference type="FunCoup" id="P76062">
    <property type="interactions" value="233"/>
</dbReference>
<dbReference type="IntAct" id="P76062">
    <property type="interactions" value="12"/>
</dbReference>
<dbReference type="STRING" id="511145.b1356"/>
<dbReference type="jPOST" id="P76062"/>
<dbReference type="PaxDb" id="511145-b1356"/>
<dbReference type="EnsemblBacteria" id="AAC74438">
    <property type="protein sequence ID" value="AAC74438"/>
    <property type="gene ID" value="b1356"/>
</dbReference>
<dbReference type="GeneID" id="86946548"/>
<dbReference type="GeneID" id="945899"/>
<dbReference type="KEGG" id="ecj:JW1351"/>
<dbReference type="KEGG" id="eco:b1356"/>
<dbReference type="KEGG" id="ecoc:C3026_07935"/>
<dbReference type="PATRIC" id="fig|1411691.4.peg.920"/>
<dbReference type="EchoBASE" id="EB3143"/>
<dbReference type="eggNOG" id="ENOG5031T0C">
    <property type="taxonomic scope" value="Bacteria"/>
</dbReference>
<dbReference type="HOGENOM" id="CLU_1666297_0_0_6"/>
<dbReference type="InParanoid" id="P76062"/>
<dbReference type="OMA" id="RCTHDEH"/>
<dbReference type="OrthoDB" id="9791537at2"/>
<dbReference type="BioCyc" id="EcoCyc:G6680-MONOMER"/>
<dbReference type="PRO" id="PR:P76062"/>
<dbReference type="Proteomes" id="UP000000625">
    <property type="component" value="Chromosome"/>
</dbReference>
<dbReference type="GO" id="GO:0003677">
    <property type="term" value="F:DNA binding"/>
    <property type="evidence" value="ECO:0007669"/>
    <property type="project" value="UniProtKB-KW"/>
</dbReference>
<dbReference type="GO" id="GO:0001217">
    <property type="term" value="F:DNA-binding transcription repressor activity"/>
    <property type="evidence" value="ECO:0000314"/>
    <property type="project" value="EcoCyc"/>
</dbReference>
<dbReference type="GO" id="GO:2000143">
    <property type="term" value="P:negative regulation of DNA-templated transcription initiation"/>
    <property type="evidence" value="ECO:0000270"/>
    <property type="project" value="EcoCyc"/>
</dbReference>
<proteinExistence type="evidence at protein level"/>
<evidence type="ECO:0000269" key="1">
    <source>
    </source>
</evidence>
<evidence type="ECO:0000269" key="2">
    <source>
    </source>
</evidence>
<evidence type="ECO:0000269" key="3">
    <source>
    </source>
</evidence>
<evidence type="ECO:0000305" key="4"/>
<organism>
    <name type="scientific">Escherichia coli (strain K12)</name>
    <dbReference type="NCBI Taxonomy" id="83333"/>
    <lineage>
        <taxon>Bacteria</taxon>
        <taxon>Pseudomonadati</taxon>
        <taxon>Pseudomonadota</taxon>
        <taxon>Gammaproteobacteria</taxon>
        <taxon>Enterobacterales</taxon>
        <taxon>Enterobacteriaceae</taxon>
        <taxon>Escherichia</taxon>
    </lineage>
</organism>